<reference key="1">
    <citation type="journal article" date="1984" name="Nucleic Acids Res.">
        <title>Structure and organization of two linked ribosomal protein genes in yeast.</title>
        <authorList>
            <person name="Molenaar C.M.T."/>
            <person name="Woudt L.P."/>
            <person name="Jansen A.E.M."/>
            <person name="Mager W.H."/>
            <person name="Planta R.J."/>
            <person name="Donovan D.M."/>
            <person name="Pearson N.J."/>
        </authorList>
    </citation>
    <scope>NUCLEOTIDE SEQUENCE [GENOMIC DNA]</scope>
</reference>
<reference key="2">
    <citation type="journal article" date="1995" name="Yeast">
        <title>Sequence analysis of a 30 kb DNA segment from yeast chromosome XIV carrying a ribosomal protein gene cluster, the genes encoding a plasma membrane protein and a subunit of replication factor C, and a novel putative serine/threonine protein kinase gene.</title>
        <authorList>
            <person name="Maurer K.C.T."/>
            <person name="Urbanus J.H.M."/>
            <person name="Planta R.J."/>
        </authorList>
    </citation>
    <scope>NUCLEOTIDE SEQUENCE [GENOMIC DNA]</scope>
    <source>
        <strain>ATCC 96604 / S288c / FY1679</strain>
    </source>
</reference>
<reference key="3">
    <citation type="journal article" date="1997" name="Nature">
        <title>The nucleotide sequence of Saccharomyces cerevisiae chromosome XIV and its evolutionary implications.</title>
        <authorList>
            <person name="Philippsen P."/>
            <person name="Kleine K."/>
            <person name="Poehlmann R."/>
            <person name="Duesterhoeft A."/>
            <person name="Hamberg K."/>
            <person name="Hegemann J.H."/>
            <person name="Obermaier B."/>
            <person name="Urrestarazu L.A."/>
            <person name="Aert R."/>
            <person name="Albermann K."/>
            <person name="Altmann R."/>
            <person name="Andre B."/>
            <person name="Baladron V."/>
            <person name="Ballesta J.P.G."/>
            <person name="Becam A.-M."/>
            <person name="Beinhauer J.D."/>
            <person name="Boskovic J."/>
            <person name="Buitrago M.J."/>
            <person name="Bussereau F."/>
            <person name="Coster F."/>
            <person name="Crouzet M."/>
            <person name="D'Angelo M."/>
            <person name="Dal Pero F."/>
            <person name="De Antoni A."/>
            <person name="del Rey F."/>
            <person name="Doignon F."/>
            <person name="Domdey H."/>
            <person name="Dubois E."/>
            <person name="Fiedler T.A."/>
            <person name="Fleig U."/>
            <person name="Floeth M."/>
            <person name="Fritz C."/>
            <person name="Gaillardin C."/>
            <person name="Garcia-Cantalejo J.M."/>
            <person name="Glansdorff N."/>
            <person name="Goffeau A."/>
            <person name="Gueldener U."/>
            <person name="Herbert C.J."/>
            <person name="Heumann K."/>
            <person name="Heuss-Neitzel D."/>
            <person name="Hilbert H."/>
            <person name="Hinni K."/>
            <person name="Iraqui Houssaini I."/>
            <person name="Jacquet M."/>
            <person name="Jimenez A."/>
            <person name="Jonniaux J.-L."/>
            <person name="Karpfinger-Hartl L."/>
            <person name="Lanfranchi G."/>
            <person name="Lepingle A."/>
            <person name="Levesque H."/>
            <person name="Lyck R."/>
            <person name="Maftahi M."/>
            <person name="Mallet L."/>
            <person name="Maurer C.T.C."/>
            <person name="Messenguy F."/>
            <person name="Mewes H.-W."/>
            <person name="Moestl D."/>
            <person name="Nasr F."/>
            <person name="Nicaud J.-M."/>
            <person name="Niedenthal R.K."/>
            <person name="Pandolfo D."/>
            <person name="Pierard A."/>
            <person name="Piravandi E."/>
            <person name="Planta R.J."/>
            <person name="Pohl T.M."/>
            <person name="Purnelle B."/>
            <person name="Rebischung C."/>
            <person name="Remacha M.A."/>
            <person name="Revuelta J.L."/>
            <person name="Rinke M."/>
            <person name="Saiz J.E."/>
            <person name="Sartorello F."/>
            <person name="Scherens B."/>
            <person name="Sen-Gupta M."/>
            <person name="Soler-Mira A."/>
            <person name="Urbanus J.H.M."/>
            <person name="Valle G."/>
            <person name="Van Dyck L."/>
            <person name="Verhasselt P."/>
            <person name="Vierendeels F."/>
            <person name="Vissers S."/>
            <person name="Voet M."/>
            <person name="Volckaert G."/>
            <person name="Wach A."/>
            <person name="Wambutt R."/>
            <person name="Wedler H."/>
            <person name="Zollner A."/>
            <person name="Hani J."/>
        </authorList>
    </citation>
    <scope>NUCLEOTIDE SEQUENCE [LARGE SCALE GENOMIC DNA]</scope>
    <source>
        <strain>ATCC 204508 / S288c</strain>
    </source>
</reference>
<reference key="4">
    <citation type="journal article" date="2014" name="G3 (Bethesda)">
        <title>The reference genome sequence of Saccharomyces cerevisiae: Then and now.</title>
        <authorList>
            <person name="Engel S.R."/>
            <person name="Dietrich F.S."/>
            <person name="Fisk D.G."/>
            <person name="Binkley G."/>
            <person name="Balakrishnan R."/>
            <person name="Costanzo M.C."/>
            <person name="Dwight S.S."/>
            <person name="Hitz B.C."/>
            <person name="Karra K."/>
            <person name="Nash R.S."/>
            <person name="Weng S."/>
            <person name="Wong E.D."/>
            <person name="Lloyd P."/>
            <person name="Skrzypek M.S."/>
            <person name="Miyasato S.R."/>
            <person name="Simison M."/>
            <person name="Cherry J.M."/>
        </authorList>
    </citation>
    <scope>GENOME REANNOTATION</scope>
    <source>
        <strain>ATCC 204508 / S288c</strain>
    </source>
</reference>
<reference key="5">
    <citation type="journal article" date="1982" name="Biochemistry">
        <title>Isolation of seventeen proteins and amino-terminal amino acid sequences of eight proteins from cytoplasmic ribosomes of yeast.</title>
        <authorList>
            <person name="Otaka E."/>
            <person name="Higo K."/>
            <person name="Osawa S."/>
        </authorList>
    </citation>
    <scope>PROTEIN SEQUENCE OF 2-50</scope>
</reference>
<reference key="6">
    <citation type="journal article" date="1998" name="Yeast">
        <title>The list of cytoplasmic ribosomal proteins of Saccharomyces cerevisiae.</title>
        <authorList>
            <person name="Planta R.J."/>
            <person name="Mager W.H."/>
        </authorList>
    </citation>
    <scope>NOMENCLATURE</scope>
    <scope>SUBUNIT</scope>
</reference>
<reference key="7">
    <citation type="journal article" date="1999" name="J. Biol. Chem.">
        <title>The action of N-terminal acetyltransferases on yeast ribosomal proteins.</title>
        <authorList>
            <person name="Arnold R.J."/>
            <person name="Polevoda B."/>
            <person name="Reilly J.P."/>
            <person name="Sherman F."/>
        </authorList>
    </citation>
    <scope>CLEAVAGE OF INITIATOR METHIONINE</scope>
</reference>
<reference key="8">
    <citation type="journal article" date="2003" name="Nature">
        <title>Global analysis of protein localization in budding yeast.</title>
        <authorList>
            <person name="Huh W.-K."/>
            <person name="Falvo J.V."/>
            <person name="Gerke L.C."/>
            <person name="Carroll A.S."/>
            <person name="Howson R.W."/>
            <person name="Weissman J.S."/>
            <person name="O'Shea E.K."/>
        </authorList>
    </citation>
    <scope>SUBCELLULAR LOCATION [LARGE SCALE ANALYSIS]</scope>
</reference>
<reference key="9">
    <citation type="journal article" date="2003" name="Nature">
        <title>Global analysis of protein expression in yeast.</title>
        <authorList>
            <person name="Ghaemmaghami S."/>
            <person name="Huh W.-K."/>
            <person name="Bower K."/>
            <person name="Howson R.W."/>
            <person name="Belle A."/>
            <person name="Dephoure N."/>
            <person name="O'Shea E.K."/>
            <person name="Weissman J.S."/>
        </authorList>
    </citation>
    <scope>LEVEL OF PROTEIN EXPRESSION [LARGE SCALE ANALYSIS]</scope>
</reference>
<reference key="10">
    <citation type="journal article" date="2005" name="J. Biol. Chem.">
        <title>Specific role for yeast homologs of the Diamond Blackfan anemia-associated Rps19 protein in ribosome synthesis.</title>
        <authorList>
            <person name="Leger-Silvestre I."/>
            <person name="Caffrey J.M."/>
            <person name="Dawaliby R."/>
            <person name="Alvarez-Arias D.A."/>
            <person name="Gas N."/>
            <person name="Bertolone S.J."/>
            <person name="Gleizes P.E."/>
            <person name="Ellis S.R."/>
        </authorList>
    </citation>
    <scope>FUNCTION IN RIBOSOME SYNTHESIS</scope>
    <scope>DISRUPTION PHENOTYPE</scope>
</reference>
<reference key="11">
    <citation type="journal article" date="2011" name="Science">
        <title>The structure of the eukaryotic ribosome at 3.0 A resolution.</title>
        <authorList>
            <person name="Ben-Shem A."/>
            <person name="Garreau de Loubresse N."/>
            <person name="Melnikov S."/>
            <person name="Jenner L."/>
            <person name="Yusupova G."/>
            <person name="Yusupov M."/>
        </authorList>
    </citation>
    <scope>SUBUNIT</scope>
    <scope>SUBCELLULAR LOCATION</scope>
</reference>
<reference key="12">
    <citation type="journal article" date="2014" name="Curr. Opin. Struct. Biol.">
        <title>A new system for naming ribosomal proteins.</title>
        <authorList>
            <person name="Ban N."/>
            <person name="Beckmann R."/>
            <person name="Cate J.H.D."/>
            <person name="Dinman J.D."/>
            <person name="Dragon F."/>
            <person name="Ellis S.R."/>
            <person name="Lafontaine D.L.J."/>
            <person name="Lindahl L."/>
            <person name="Liljas A."/>
            <person name="Lipton J.M."/>
            <person name="McAlear M.A."/>
            <person name="Moore P.B."/>
            <person name="Noller H.F."/>
            <person name="Ortega J."/>
            <person name="Panse V.G."/>
            <person name="Ramakrishnan V."/>
            <person name="Spahn C.M.T."/>
            <person name="Steitz T.A."/>
            <person name="Tchorzewski M."/>
            <person name="Tollervey D."/>
            <person name="Warren A.J."/>
            <person name="Williamson J.R."/>
            <person name="Wilson D."/>
            <person name="Yonath A."/>
            <person name="Yusupov M."/>
        </authorList>
    </citation>
    <scope>NOMENCLATURE</scope>
</reference>
<accession>P07281</accession>
<accession>D6W0P2</accession>
<dbReference type="EMBL" id="X01100">
    <property type="protein sequence ID" value="CAA25575.1"/>
    <property type="molecule type" value="Genomic_DNA"/>
</dbReference>
<dbReference type="EMBL" id="U23084">
    <property type="protein sequence ID" value="AAC49096.1"/>
    <property type="molecule type" value="Genomic_DNA"/>
</dbReference>
<dbReference type="EMBL" id="Z71578">
    <property type="protein sequence ID" value="CAA96220.1"/>
    <property type="molecule type" value="Genomic_DNA"/>
</dbReference>
<dbReference type="EMBL" id="BK006947">
    <property type="protein sequence ID" value="DAA10258.1"/>
    <property type="molecule type" value="Genomic_DNA"/>
</dbReference>
<dbReference type="PIR" id="S60398">
    <property type="entry name" value="S60398"/>
</dbReference>
<dbReference type="RefSeq" id="NP_014097.1">
    <property type="nucleotide sequence ID" value="NM_001183140.1"/>
</dbReference>
<dbReference type="SMR" id="P07281"/>
<dbReference type="BioGRID" id="35536">
    <property type="interactions" value="290"/>
</dbReference>
<dbReference type="ComplexPortal" id="CPX-1599">
    <property type="entry name" value="40S cytosolic small ribosomal subunit"/>
</dbReference>
<dbReference type="FunCoup" id="P07281">
    <property type="interactions" value="992"/>
</dbReference>
<dbReference type="IntAct" id="P07281">
    <property type="interactions" value="85"/>
</dbReference>
<dbReference type="MINT" id="P07281"/>
<dbReference type="STRING" id="4932.YNL302C"/>
<dbReference type="CarbonylDB" id="P07281"/>
<dbReference type="iPTMnet" id="P07281"/>
<dbReference type="PaxDb" id="4932-YNL302C"/>
<dbReference type="PeptideAtlas" id="P07281"/>
<dbReference type="TopDownProteomics" id="P07281"/>
<dbReference type="EnsemblFungi" id="YNL302C_mRNA">
    <property type="protein sequence ID" value="YNL302C"/>
    <property type="gene ID" value="YNL302C"/>
</dbReference>
<dbReference type="GeneID" id="855414"/>
<dbReference type="KEGG" id="sce:YNL302C"/>
<dbReference type="AGR" id="SGD:S000005246"/>
<dbReference type="SGD" id="S000005246">
    <property type="gene designation" value="RPS19B"/>
</dbReference>
<dbReference type="VEuPathDB" id="FungiDB:YNL302C"/>
<dbReference type="eggNOG" id="KOG3411">
    <property type="taxonomic scope" value="Eukaryota"/>
</dbReference>
<dbReference type="GeneTree" id="ENSGT00940000176238"/>
<dbReference type="HOGENOM" id="CLU_108559_3_0_1"/>
<dbReference type="InParanoid" id="P07281"/>
<dbReference type="OMA" id="YYTRTAS"/>
<dbReference type="OrthoDB" id="428974at2759"/>
<dbReference type="BioCyc" id="YEAST:G3O-33290-MONOMER"/>
<dbReference type="BioGRID-ORCS" id="855414">
    <property type="hits" value="9 hits in 10 CRISPR screens"/>
</dbReference>
<dbReference type="PRO" id="PR:P07281"/>
<dbReference type="Proteomes" id="UP000002311">
    <property type="component" value="Chromosome XIV"/>
</dbReference>
<dbReference type="RNAct" id="P07281">
    <property type="molecule type" value="protein"/>
</dbReference>
<dbReference type="GO" id="GO:0005829">
    <property type="term" value="C:cytosol"/>
    <property type="evidence" value="ECO:0000304"/>
    <property type="project" value="Reactome"/>
</dbReference>
<dbReference type="GO" id="GO:0022627">
    <property type="term" value="C:cytosolic small ribosomal subunit"/>
    <property type="evidence" value="ECO:0000314"/>
    <property type="project" value="SGD"/>
</dbReference>
<dbReference type="GO" id="GO:0003723">
    <property type="term" value="F:RNA binding"/>
    <property type="evidence" value="ECO:0000318"/>
    <property type="project" value="GO_Central"/>
</dbReference>
<dbReference type="GO" id="GO:0003735">
    <property type="term" value="F:structural constituent of ribosome"/>
    <property type="evidence" value="ECO:0000314"/>
    <property type="project" value="SGD"/>
</dbReference>
<dbReference type="GO" id="GO:0000028">
    <property type="term" value="P:ribosomal small subunit assembly"/>
    <property type="evidence" value="ECO:0000318"/>
    <property type="project" value="GO_Central"/>
</dbReference>
<dbReference type="GO" id="GO:0042274">
    <property type="term" value="P:ribosomal small subunit biogenesis"/>
    <property type="evidence" value="ECO:0000315"/>
    <property type="project" value="SGD"/>
</dbReference>
<dbReference type="GO" id="GO:0000054">
    <property type="term" value="P:ribosomal subunit export from nucleus"/>
    <property type="evidence" value="ECO:0000315"/>
    <property type="project" value="SGD"/>
</dbReference>
<dbReference type="GO" id="GO:0006412">
    <property type="term" value="P:translation"/>
    <property type="evidence" value="ECO:0007669"/>
    <property type="project" value="InterPro"/>
</dbReference>
<dbReference type="FunFam" id="1.10.10.10:FF:000118">
    <property type="entry name" value="40S ribosomal protein S19"/>
    <property type="match status" value="1"/>
</dbReference>
<dbReference type="Gene3D" id="1.10.10.10">
    <property type="entry name" value="Winged helix-like DNA-binding domain superfamily/Winged helix DNA-binding domain"/>
    <property type="match status" value="1"/>
</dbReference>
<dbReference type="InterPro" id="IPR001266">
    <property type="entry name" value="Ribosomal_eS19"/>
</dbReference>
<dbReference type="InterPro" id="IPR018277">
    <property type="entry name" value="Ribosomal_eS19_CS"/>
</dbReference>
<dbReference type="InterPro" id="IPR036388">
    <property type="entry name" value="WH-like_DNA-bd_sf"/>
</dbReference>
<dbReference type="InterPro" id="IPR036390">
    <property type="entry name" value="WH_DNA-bd_sf"/>
</dbReference>
<dbReference type="PANTHER" id="PTHR11710">
    <property type="entry name" value="40S RIBOSOMAL PROTEIN S19"/>
    <property type="match status" value="1"/>
</dbReference>
<dbReference type="PANTHER" id="PTHR11710:SF0">
    <property type="entry name" value="40S RIBOSOMAL PROTEIN S19"/>
    <property type="match status" value="1"/>
</dbReference>
<dbReference type="Pfam" id="PF01090">
    <property type="entry name" value="Ribosomal_S19e"/>
    <property type="match status" value="1"/>
</dbReference>
<dbReference type="SMART" id="SM01413">
    <property type="entry name" value="Ribosomal_S19e"/>
    <property type="match status" value="1"/>
</dbReference>
<dbReference type="SUPFAM" id="SSF46785">
    <property type="entry name" value="Winged helix' DNA-binding domain"/>
    <property type="match status" value="1"/>
</dbReference>
<dbReference type="PROSITE" id="PS00628">
    <property type="entry name" value="RIBOSOMAL_S19E"/>
    <property type="match status" value="1"/>
</dbReference>
<proteinExistence type="evidence at protein level"/>
<sequence length="144" mass="15891">MAGVSVRDVAAQDFINAYASFLQRQGKLEVPGYVDIVKTSSGNEMPPQDAEGWFYKRAASVARHIYMRKQVGVGKLNKLYGGAKSRGVRPYKHIDASGSINRKVLQALEKIGIVEISPKGGRRISENGQRDLDRIAAQTLEEDE</sequence>
<keyword id="KW-0963">Cytoplasm</keyword>
<keyword id="KW-0903">Direct protein sequencing</keyword>
<keyword id="KW-1185">Reference proteome</keyword>
<keyword id="KW-0687">Ribonucleoprotein</keyword>
<keyword id="KW-0689">Ribosomal protein</keyword>
<keyword id="KW-0690">Ribosome biogenesis</keyword>
<feature type="initiator methionine" description="Removed" evidence="1 6">
    <location>
        <position position="1"/>
    </location>
</feature>
<feature type="chain" id="PRO_0000153836" description="Small ribosomal subunit protein eS19B">
    <location>
        <begin position="2"/>
        <end position="144"/>
    </location>
</feature>
<evidence type="ECO:0000269" key="1">
    <source>
    </source>
</evidence>
<evidence type="ECO:0000269" key="2">
    <source>
    </source>
</evidence>
<evidence type="ECO:0000269" key="3">
    <source>
    </source>
</evidence>
<evidence type="ECO:0000269" key="4">
    <source>
    </source>
</evidence>
<evidence type="ECO:0000269" key="5">
    <source>
    </source>
</evidence>
<evidence type="ECO:0000269" key="6">
    <source>
    </source>
</evidence>
<evidence type="ECO:0000303" key="7">
    <source>
    </source>
</evidence>
<evidence type="ECO:0000303" key="8">
    <source>
    </source>
</evidence>
<evidence type="ECO:0000305" key="9"/>
<evidence type="ECO:0000305" key="10">
    <source>
    </source>
</evidence>
<evidence type="ECO:0000305" key="11">
    <source>
    </source>
</evidence>
<comment type="function">
    <text evidence="4 10">Component of the ribosome, a large ribonucleoprotein complex responsible for the synthesis of proteins in the cell. The small ribosomal subunit (SSU) binds messenger RNAs (mRNAs) and translates the encoded message by selecting cognate aminoacyl-transfer RNA (tRNA) molecules. The large subunit (LSU) contains the ribosomal catalytic site termed the peptidyl transferase center (PTC), which catalyzes the formation of peptide bonds, thereby polymerizing the amino acids delivered by tRNAs into a polypeptide chain. The nascent polypeptides leave the ribosome through a tunnel in the LSU and interact with protein factors that function in enzymatic processing, targeting, and the membrane insertion of nascent chains at the exit of the ribosomal tunnel (PubMed:22096102). eS19 is required for proper maturation of the small (40S) ribosomal subunit. Binds to 40S pre-ribosomal particles, probably required after association of NOC4 but before association of ENP1, TSR1 and RIO2 with 20/21S pre-rRNA (PubMed:16159874).</text>
</comment>
<comment type="function">
    <text evidence="4">Required for proper maturation of the small (40S) ribosomal subunit. Binds to 40s pre-ribosomal particles, probably required after association of NOC4 but before association of ENP1, TSR1 and RIO2 with 20/21S pre-rRNA.</text>
</comment>
<comment type="subunit">
    <text evidence="5 11">Component of the small ribosomal subunit (SSU). Mature yeast ribosomes consist of a small (40S) and a large (60S) subunit. The 40S small subunit contains 1 molecule of ribosomal RNA (18S rRNA) and 33 different proteins (encoded by 57 genes). The large 60S subunit contains 3 rRNA molecules (25S, 5.8S and 5S rRNA) and 46 different proteins (encoded by 81 genes) (PubMed:22096102, PubMed:9559554).</text>
</comment>
<comment type="subcellular location">
    <subcellularLocation>
        <location evidence="2 5">Cytoplasm</location>
    </subcellularLocation>
</comment>
<comment type="disruption phenotype">
    <text evidence="4">Disruption of a single RPS19 gene reduces cell growth; a double disruption is lethal. Depletion experiments show the proteins are required for correct maturation of precursor rRNA to generate the 18S small rRNA. A specific site between the 18S and 5.8S precursors (site A2 in ETS1) is not cleaved in disruption mutants. Partially assembled ribosomes are retained in the nucleolus rather than being exported to the cytoplasm. All effects are exacerbated in the double disruption. Increases association of NOC4 with 20/21S pre-rRNA, decreases association of ENP1, TSR1 and RIO2 with 20/21S pre-rRNA.</text>
</comment>
<comment type="miscellaneous">
    <text evidence="3">Present with 3440 molecules/cell in log phase SD medium.</text>
</comment>
<comment type="miscellaneous">
    <text evidence="9">There are 2 genes for eS19 in yeast.</text>
</comment>
<comment type="similarity">
    <text evidence="9">Belongs to the eukaryotic ribosomal protein eS19 family.</text>
</comment>
<name>RS19B_YEAST</name>
<organism>
    <name type="scientific">Saccharomyces cerevisiae (strain ATCC 204508 / S288c)</name>
    <name type="common">Baker's yeast</name>
    <dbReference type="NCBI Taxonomy" id="559292"/>
    <lineage>
        <taxon>Eukaryota</taxon>
        <taxon>Fungi</taxon>
        <taxon>Dikarya</taxon>
        <taxon>Ascomycota</taxon>
        <taxon>Saccharomycotina</taxon>
        <taxon>Saccharomycetes</taxon>
        <taxon>Saccharomycetales</taxon>
        <taxon>Saccharomycetaceae</taxon>
        <taxon>Saccharomyces</taxon>
    </lineage>
</organism>
<protein>
    <recommendedName>
        <fullName evidence="7">Small ribosomal subunit protein eS19B</fullName>
    </recommendedName>
    <alternativeName>
        <fullName evidence="8">40S ribosomal protein S19-B</fullName>
    </alternativeName>
    <alternativeName>
        <fullName>RP55B</fullName>
    </alternativeName>
    <alternativeName>
        <fullName>S16a</fullName>
    </alternativeName>
    <alternativeName>
        <fullName>YS16B</fullName>
    </alternativeName>
</protein>
<gene>
    <name evidence="8" type="primary">RPS19B</name>
    <name type="synonym">RP55B</name>
    <name type="synonym">RPS16AB</name>
    <name type="ordered locus">YNL302C</name>
    <name type="ORF">N0422</name>
</gene>